<protein>
    <recommendedName>
        <fullName>Homeotic protein caudal</fullName>
    </recommendedName>
</protein>
<reference key="1">
    <citation type="journal article" date="1987" name="Cell">
        <title>Expression of the caudal gene in the germ line of Drosophila: formation of an RNA and protein gradient during early embryogenesis.</title>
        <authorList>
            <person name="Mlodzik M."/>
            <person name="Gehring W.J."/>
        </authorList>
    </citation>
    <scope>NUCLEOTIDE SEQUENCE [GENOMIC DNA]</scope>
    <scope>SUBCELLULAR LOCATION</scope>
    <scope>ALTERNATIVE SPLICING (ISOFORM 1)</scope>
    <scope>TISSUE SPECIFICITY</scope>
    <scope>DEVELOPMENTAL STAGE</scope>
</reference>
<reference key="2">
    <citation type="journal article" date="2000" name="Science">
        <title>The genome sequence of Drosophila melanogaster.</title>
        <authorList>
            <person name="Adams M.D."/>
            <person name="Celniker S.E."/>
            <person name="Holt R.A."/>
            <person name="Evans C.A."/>
            <person name="Gocayne J.D."/>
            <person name="Amanatides P.G."/>
            <person name="Scherer S.E."/>
            <person name="Li P.W."/>
            <person name="Hoskins R.A."/>
            <person name="Galle R.F."/>
            <person name="George R.A."/>
            <person name="Lewis S.E."/>
            <person name="Richards S."/>
            <person name="Ashburner M."/>
            <person name="Henderson S.N."/>
            <person name="Sutton G.G."/>
            <person name="Wortman J.R."/>
            <person name="Yandell M.D."/>
            <person name="Zhang Q."/>
            <person name="Chen L.X."/>
            <person name="Brandon R.C."/>
            <person name="Rogers Y.-H.C."/>
            <person name="Blazej R.G."/>
            <person name="Champe M."/>
            <person name="Pfeiffer B.D."/>
            <person name="Wan K.H."/>
            <person name="Doyle C."/>
            <person name="Baxter E.G."/>
            <person name="Helt G."/>
            <person name="Nelson C.R."/>
            <person name="Miklos G.L.G."/>
            <person name="Abril J.F."/>
            <person name="Agbayani A."/>
            <person name="An H.-J."/>
            <person name="Andrews-Pfannkoch C."/>
            <person name="Baldwin D."/>
            <person name="Ballew R.M."/>
            <person name="Basu A."/>
            <person name="Baxendale J."/>
            <person name="Bayraktaroglu L."/>
            <person name="Beasley E.M."/>
            <person name="Beeson K.Y."/>
            <person name="Benos P.V."/>
            <person name="Berman B.P."/>
            <person name="Bhandari D."/>
            <person name="Bolshakov S."/>
            <person name="Borkova D."/>
            <person name="Botchan M.R."/>
            <person name="Bouck J."/>
            <person name="Brokstein P."/>
            <person name="Brottier P."/>
            <person name="Burtis K.C."/>
            <person name="Busam D.A."/>
            <person name="Butler H."/>
            <person name="Cadieu E."/>
            <person name="Center A."/>
            <person name="Chandra I."/>
            <person name="Cherry J.M."/>
            <person name="Cawley S."/>
            <person name="Dahlke C."/>
            <person name="Davenport L.B."/>
            <person name="Davies P."/>
            <person name="de Pablos B."/>
            <person name="Delcher A."/>
            <person name="Deng Z."/>
            <person name="Mays A.D."/>
            <person name="Dew I."/>
            <person name="Dietz S.M."/>
            <person name="Dodson K."/>
            <person name="Doup L.E."/>
            <person name="Downes M."/>
            <person name="Dugan-Rocha S."/>
            <person name="Dunkov B.C."/>
            <person name="Dunn P."/>
            <person name="Durbin K.J."/>
            <person name="Evangelista C.C."/>
            <person name="Ferraz C."/>
            <person name="Ferriera S."/>
            <person name="Fleischmann W."/>
            <person name="Fosler C."/>
            <person name="Gabrielian A.E."/>
            <person name="Garg N.S."/>
            <person name="Gelbart W.M."/>
            <person name="Glasser K."/>
            <person name="Glodek A."/>
            <person name="Gong F."/>
            <person name="Gorrell J.H."/>
            <person name="Gu Z."/>
            <person name="Guan P."/>
            <person name="Harris M."/>
            <person name="Harris N.L."/>
            <person name="Harvey D.A."/>
            <person name="Heiman T.J."/>
            <person name="Hernandez J.R."/>
            <person name="Houck J."/>
            <person name="Hostin D."/>
            <person name="Houston K.A."/>
            <person name="Howland T.J."/>
            <person name="Wei M.-H."/>
            <person name="Ibegwam C."/>
            <person name="Jalali M."/>
            <person name="Kalush F."/>
            <person name="Karpen G.H."/>
            <person name="Ke Z."/>
            <person name="Kennison J.A."/>
            <person name="Ketchum K.A."/>
            <person name="Kimmel B.E."/>
            <person name="Kodira C.D."/>
            <person name="Kraft C.L."/>
            <person name="Kravitz S."/>
            <person name="Kulp D."/>
            <person name="Lai Z."/>
            <person name="Lasko P."/>
            <person name="Lei Y."/>
            <person name="Levitsky A.A."/>
            <person name="Li J.H."/>
            <person name="Li Z."/>
            <person name="Liang Y."/>
            <person name="Lin X."/>
            <person name="Liu X."/>
            <person name="Mattei B."/>
            <person name="McIntosh T.C."/>
            <person name="McLeod M.P."/>
            <person name="McPherson D."/>
            <person name="Merkulov G."/>
            <person name="Milshina N.V."/>
            <person name="Mobarry C."/>
            <person name="Morris J."/>
            <person name="Moshrefi A."/>
            <person name="Mount S.M."/>
            <person name="Moy M."/>
            <person name="Murphy B."/>
            <person name="Murphy L."/>
            <person name="Muzny D.M."/>
            <person name="Nelson D.L."/>
            <person name="Nelson D.R."/>
            <person name="Nelson K.A."/>
            <person name="Nixon K."/>
            <person name="Nusskern D.R."/>
            <person name="Pacleb J.M."/>
            <person name="Palazzolo M."/>
            <person name="Pittman G.S."/>
            <person name="Pan S."/>
            <person name="Pollard J."/>
            <person name="Puri V."/>
            <person name="Reese M.G."/>
            <person name="Reinert K."/>
            <person name="Remington K."/>
            <person name="Saunders R.D.C."/>
            <person name="Scheeler F."/>
            <person name="Shen H."/>
            <person name="Shue B.C."/>
            <person name="Siden-Kiamos I."/>
            <person name="Simpson M."/>
            <person name="Skupski M.P."/>
            <person name="Smith T.J."/>
            <person name="Spier E."/>
            <person name="Spradling A.C."/>
            <person name="Stapleton M."/>
            <person name="Strong R."/>
            <person name="Sun E."/>
            <person name="Svirskas R."/>
            <person name="Tector C."/>
            <person name="Turner R."/>
            <person name="Venter E."/>
            <person name="Wang A.H."/>
            <person name="Wang X."/>
            <person name="Wang Z.-Y."/>
            <person name="Wassarman D.A."/>
            <person name="Weinstock G.M."/>
            <person name="Weissenbach J."/>
            <person name="Williams S.M."/>
            <person name="Woodage T."/>
            <person name="Worley K.C."/>
            <person name="Wu D."/>
            <person name="Yang S."/>
            <person name="Yao Q.A."/>
            <person name="Ye J."/>
            <person name="Yeh R.-F."/>
            <person name="Zaveri J.S."/>
            <person name="Zhan M."/>
            <person name="Zhang G."/>
            <person name="Zhao Q."/>
            <person name="Zheng L."/>
            <person name="Zheng X.H."/>
            <person name="Zhong F.N."/>
            <person name="Zhong W."/>
            <person name="Zhou X."/>
            <person name="Zhu S.C."/>
            <person name="Zhu X."/>
            <person name="Smith H.O."/>
            <person name="Gibbs R.A."/>
            <person name="Myers E.W."/>
            <person name="Rubin G.M."/>
            <person name="Venter J.C."/>
        </authorList>
    </citation>
    <scope>NUCLEOTIDE SEQUENCE [LARGE SCALE GENOMIC DNA]</scope>
    <source>
        <strain>Berkeley</strain>
    </source>
</reference>
<reference key="3">
    <citation type="journal article" date="2002" name="Genome Biol.">
        <title>Annotation of the Drosophila melanogaster euchromatic genome: a systematic review.</title>
        <authorList>
            <person name="Misra S."/>
            <person name="Crosby M.A."/>
            <person name="Mungall C.J."/>
            <person name="Matthews B.B."/>
            <person name="Campbell K.S."/>
            <person name="Hradecky P."/>
            <person name="Huang Y."/>
            <person name="Kaminker J.S."/>
            <person name="Millburn G.H."/>
            <person name="Prochnik S.E."/>
            <person name="Smith C.D."/>
            <person name="Tupy J.L."/>
            <person name="Whitfield E.J."/>
            <person name="Bayraktaroglu L."/>
            <person name="Berman B.P."/>
            <person name="Bettencourt B.R."/>
            <person name="Celniker S.E."/>
            <person name="de Grey A.D.N.J."/>
            <person name="Drysdale R.A."/>
            <person name="Harris N.L."/>
            <person name="Richter J."/>
            <person name="Russo S."/>
            <person name="Schroeder A.J."/>
            <person name="Shu S.Q."/>
            <person name="Stapleton M."/>
            <person name="Yamada C."/>
            <person name="Ashburner M."/>
            <person name="Gelbart W.M."/>
            <person name="Rubin G.M."/>
            <person name="Lewis S.E."/>
        </authorList>
    </citation>
    <scope>GENOME REANNOTATION</scope>
    <source>
        <strain>Berkeley</strain>
    </source>
</reference>
<reference key="4">
    <citation type="journal article" date="2002" name="Genome Biol.">
        <title>A Drosophila full-length cDNA resource.</title>
        <authorList>
            <person name="Stapleton M."/>
            <person name="Carlson J.W."/>
            <person name="Brokstein P."/>
            <person name="Yu C."/>
            <person name="Champe M."/>
            <person name="George R.A."/>
            <person name="Guarin H."/>
            <person name="Kronmiller B."/>
            <person name="Pacleb J.M."/>
            <person name="Park S."/>
            <person name="Wan K.H."/>
            <person name="Rubin G.M."/>
            <person name="Celniker S.E."/>
        </authorList>
    </citation>
    <scope>NUCLEOTIDE SEQUENCE [LARGE SCALE MRNA] (ISOFORM 1)</scope>
    <source>
        <strain>Berkeley</strain>
        <tissue>Embryo</tissue>
    </source>
</reference>
<reference key="5">
    <citation type="submission" date="2010-03" db="EMBL/GenBank/DDBJ databases">
        <authorList>
            <person name="Carlson J."/>
            <person name="Booth B."/>
            <person name="Frise E."/>
            <person name="Sandler J."/>
            <person name="Wan K."/>
            <person name="Yu C."/>
            <person name="Celniker S."/>
        </authorList>
    </citation>
    <scope>NUCLEOTIDE SEQUENCE [LARGE SCALE MRNA] (ISOFORM 2)</scope>
</reference>
<reference key="6">
    <citation type="journal article" date="1985" name="EMBO J.">
        <title>Isolation of caudal, a Drosophila homeo box-containing gene with maternal expression, whose transcripts form a concentration gradient at the pre-blastoderm stage.</title>
        <authorList>
            <person name="Mlodzik M."/>
            <person name="Fjose A."/>
            <person name="Gehring W.J."/>
        </authorList>
    </citation>
    <scope>NUCLEOTIDE SEQUENCE [MRNA] OF 212-409 (ISOFORM 1)</scope>
    <scope>DEVELOPMENTAL STAGE</scope>
</reference>
<reference key="7">
    <citation type="journal article" date="1995" name="Development">
        <title>Zygotic caudal regulation by hunchback and its role in abdominal segment formation of the Drosophila embryo.</title>
        <authorList>
            <person name="Schulz C."/>
            <person name="Tautz D."/>
        </authorList>
    </citation>
    <scope>FUNCTION</scope>
</reference>
<reference key="8">
    <citation type="journal article" date="1998" name="Development">
        <title>Role of caudal in hindgut specification and gastrulation suggests homology between Drosophila amnioproctodeal invagination and vertebrate blastopore.</title>
        <authorList>
            <person name="Wu L.H."/>
            <person name="Lengyel J.A."/>
        </authorList>
    </citation>
    <scope>FUNCTION</scope>
</reference>
<reference key="9">
    <citation type="journal article" date="2002" name="Nucleic Acids Res.">
        <title>The caudal homeodomain protein activates Drosophila E2F gene expression.</title>
        <authorList>
            <person name="Hwang M.S."/>
            <person name="Kim Y.S."/>
            <person name="Choi N.H."/>
            <person name="Park J.H."/>
            <person name="Oh E.J."/>
            <person name="Kwon E.J."/>
            <person name="Yamaguchi M."/>
            <person name="Yoo M.A."/>
        </authorList>
    </citation>
    <scope>FUNCTION</scope>
</reference>
<reference key="10">
    <citation type="journal article" date="2004" name="Nucleic Acids Res.">
        <title>Transcriptional regulation of the Drosophila caudal homeobox gene by DRE/DREF.</title>
        <authorList>
            <person name="Choi Y.J."/>
            <person name="Choi T.Y."/>
            <person name="Yamaguchi M."/>
            <person name="Matsukage A."/>
            <person name="Kim Y.S."/>
            <person name="Yoo M.A."/>
        </authorList>
    </citation>
    <scope>FUNCTION</scope>
</reference>
<reference key="11">
    <citation type="journal article" date="2008" name="J. Proteome Res.">
        <title>Phosphoproteome analysis of Drosophila melanogaster embryos.</title>
        <authorList>
            <person name="Zhai B."/>
            <person name="Villen J."/>
            <person name="Beausoleil S.A."/>
            <person name="Mintseris J."/>
            <person name="Gygi S.P."/>
        </authorList>
    </citation>
    <scope>PHOSPHORYLATION [LARGE SCALE ANALYSIS] AT THR-245</scope>
    <scope>IDENTIFICATION BY MASS SPECTROMETRY</scope>
    <source>
        <tissue>Embryo</tissue>
    </source>
</reference>
<sequence length="427" mass="45726">MVSHYYNTLPYTQKHSAANLAYASAAGQPWNWTPNYHHTPPNHQFLGDVDSSHAAHHAAAAHQMYYNSHHMFHSAAAASAGEWHSPASSTADNFVQNVPTSAHQLMQQHHHHHAHASSSSASSGSSSSGGAPGAPQLNETNSSIGVGGAGGGGGVGGATDGGPGSAPPNHQQHIAEGLPSPPITVSGSEISSPGAPTSASSPHHHLAHHLSAVANNNNNNNNNNNSPSTHNNNNNNNSVSNNNRTSPSKPPYFDWMKKPAYPAQPQPGKTRTKDKYRVVYTDFQRLELEKEYCTSRYITIRRKSELAQTLSLSERQVKIWFQNRRAKERKQNKKGSDPNVMGVGVQHADYSQLLDAKAKLEPGLHLSHSLAHSMNPMAAMNIPAMRLHPHLAAHSHSLAAVAAHSHQLQQQHSAQMSAAAAVGTLSM</sequence>
<organism>
    <name type="scientific">Drosophila melanogaster</name>
    <name type="common">Fruit fly</name>
    <dbReference type="NCBI Taxonomy" id="7227"/>
    <lineage>
        <taxon>Eukaryota</taxon>
        <taxon>Metazoa</taxon>
        <taxon>Ecdysozoa</taxon>
        <taxon>Arthropoda</taxon>
        <taxon>Hexapoda</taxon>
        <taxon>Insecta</taxon>
        <taxon>Pterygota</taxon>
        <taxon>Neoptera</taxon>
        <taxon>Endopterygota</taxon>
        <taxon>Diptera</taxon>
        <taxon>Brachycera</taxon>
        <taxon>Muscomorpha</taxon>
        <taxon>Ephydroidea</taxon>
        <taxon>Drosophilidae</taxon>
        <taxon>Drosophila</taxon>
        <taxon>Sophophora</taxon>
    </lineage>
</organism>
<dbReference type="EMBL" id="M21070">
    <property type="protein sequence ID" value="AAA28409.1"/>
    <property type="status" value="ALT_FRAME"/>
    <property type="molecule type" value="Genomic_DNA"/>
</dbReference>
<dbReference type="EMBL" id="M21069">
    <property type="protein sequence ID" value="AAA28409.1"/>
    <property type="status" value="JOINED"/>
    <property type="molecule type" value="Genomic_DNA"/>
</dbReference>
<dbReference type="EMBL" id="AE014134">
    <property type="protein sequence ID" value="AAF53923.1"/>
    <property type="molecule type" value="Genomic_DNA"/>
</dbReference>
<dbReference type="EMBL" id="AE014134">
    <property type="protein sequence ID" value="AAN11088.1"/>
    <property type="molecule type" value="Genomic_DNA"/>
</dbReference>
<dbReference type="EMBL" id="AY069565">
    <property type="protein sequence ID" value="AAL39710.1"/>
    <property type="molecule type" value="mRNA"/>
</dbReference>
<dbReference type="EMBL" id="BT122084">
    <property type="protein sequence ID" value="ADE06690.1"/>
    <property type="molecule type" value="mRNA"/>
</dbReference>
<dbReference type="EMBL" id="X03062">
    <property type="protein sequence ID" value="CAA26868.1"/>
    <property type="molecule type" value="mRNA"/>
</dbReference>
<dbReference type="PIR" id="A26357">
    <property type="entry name" value="A26357"/>
</dbReference>
<dbReference type="RefSeq" id="NP_476954.1">
    <molecule id="P09085-1"/>
    <property type="nucleotide sequence ID" value="NM_057606.6"/>
</dbReference>
<dbReference type="RefSeq" id="NP_599128.1">
    <molecule id="P09085-1"/>
    <property type="nucleotide sequence ID" value="NM_134301.4"/>
</dbReference>
<dbReference type="SMR" id="P09085"/>
<dbReference type="BioGRID" id="61304">
    <property type="interactions" value="35"/>
</dbReference>
<dbReference type="FunCoup" id="P09085">
    <property type="interactions" value="244"/>
</dbReference>
<dbReference type="IntAct" id="P09085">
    <property type="interactions" value="6"/>
</dbReference>
<dbReference type="STRING" id="7227.FBpp0307151"/>
<dbReference type="iPTMnet" id="P09085"/>
<dbReference type="PaxDb" id="7227-FBpp0080942"/>
<dbReference type="DNASU" id="35341"/>
<dbReference type="EnsemblMetazoa" id="FBtr0081412">
    <molecule id="P09085-1"/>
    <property type="protein sequence ID" value="FBpp0080942"/>
    <property type="gene ID" value="FBgn0000251"/>
</dbReference>
<dbReference type="EnsemblMetazoa" id="FBtr0081413">
    <molecule id="P09085-1"/>
    <property type="protein sequence ID" value="FBpp0089336"/>
    <property type="gene ID" value="FBgn0000251"/>
</dbReference>
<dbReference type="GeneID" id="35341"/>
<dbReference type="KEGG" id="dme:Dmel_CG1759"/>
<dbReference type="UCSC" id="CG1759-RA">
    <molecule id="P09085-1"/>
    <property type="organism name" value="d. melanogaster"/>
</dbReference>
<dbReference type="UCSC" id="CG1759-RB">
    <property type="organism name" value="d. melanogaster"/>
</dbReference>
<dbReference type="AGR" id="FB:FBgn0000251"/>
<dbReference type="CTD" id="790"/>
<dbReference type="FlyBase" id="FBgn0000251">
    <property type="gene designation" value="cad"/>
</dbReference>
<dbReference type="VEuPathDB" id="VectorBase:FBgn0000251"/>
<dbReference type="eggNOG" id="KOG0848">
    <property type="taxonomic scope" value="Eukaryota"/>
</dbReference>
<dbReference type="GeneTree" id="ENSGT00940000164078"/>
<dbReference type="HOGENOM" id="CLU_700614_0_0_1"/>
<dbReference type="InParanoid" id="P09085"/>
<dbReference type="OrthoDB" id="6159439at2759"/>
<dbReference type="PhylomeDB" id="P09085"/>
<dbReference type="SignaLink" id="P09085"/>
<dbReference type="BioGRID-ORCS" id="35341">
    <property type="hits" value="0 hits in 3 CRISPR screens"/>
</dbReference>
<dbReference type="GenomeRNAi" id="35341"/>
<dbReference type="PRO" id="PR:P09085"/>
<dbReference type="Proteomes" id="UP000000803">
    <property type="component" value="Chromosome 2L"/>
</dbReference>
<dbReference type="Bgee" id="FBgn0000251">
    <property type="expression patterns" value="Expressed in adult Malpighian tubule principal cell of lower segment in Malpighian tubule and 90 other cell types or tissues"/>
</dbReference>
<dbReference type="ExpressionAtlas" id="P09085">
    <property type="expression patterns" value="baseline and differential"/>
</dbReference>
<dbReference type="GO" id="GO:0005737">
    <property type="term" value="C:cytoplasm"/>
    <property type="evidence" value="ECO:0000314"/>
    <property type="project" value="FlyBase"/>
</dbReference>
<dbReference type="GO" id="GO:0005634">
    <property type="term" value="C:nucleus"/>
    <property type="evidence" value="ECO:0000314"/>
    <property type="project" value="FlyBase"/>
</dbReference>
<dbReference type="GO" id="GO:0003700">
    <property type="term" value="F:DNA-binding transcription factor activity"/>
    <property type="evidence" value="ECO:0000314"/>
    <property type="project" value="FlyBase"/>
</dbReference>
<dbReference type="GO" id="GO:0000981">
    <property type="term" value="F:DNA-binding transcription factor activity, RNA polymerase II-specific"/>
    <property type="evidence" value="ECO:0007669"/>
    <property type="project" value="InterPro"/>
</dbReference>
<dbReference type="GO" id="GO:0000977">
    <property type="term" value="F:RNA polymerase II transcription regulatory region sequence-specific DNA binding"/>
    <property type="evidence" value="ECO:0000314"/>
    <property type="project" value="FlyBase"/>
</dbReference>
<dbReference type="GO" id="GO:0007487">
    <property type="term" value="P:analia development"/>
    <property type="evidence" value="ECO:0000304"/>
    <property type="project" value="FlyBase"/>
</dbReference>
<dbReference type="GO" id="GO:0009948">
    <property type="term" value="P:anterior/posterior axis specification"/>
    <property type="evidence" value="ECO:0000318"/>
    <property type="project" value="GO_Central"/>
</dbReference>
<dbReference type="GO" id="GO:0007350">
    <property type="term" value="P:blastoderm segmentation"/>
    <property type="evidence" value="ECO:0000315"/>
    <property type="project" value="UniProtKB"/>
</dbReference>
<dbReference type="GO" id="GO:0030154">
    <property type="term" value="P:cell differentiation"/>
    <property type="evidence" value="ECO:0000318"/>
    <property type="project" value="GO_Central"/>
</dbReference>
<dbReference type="GO" id="GO:0048565">
    <property type="term" value="P:digestive tract development"/>
    <property type="evidence" value="ECO:0000318"/>
    <property type="project" value="GO_Central"/>
</dbReference>
<dbReference type="GO" id="GO:0009880">
    <property type="term" value="P:embryonic pattern specification"/>
    <property type="evidence" value="ECO:0000318"/>
    <property type="project" value="GO_Central"/>
</dbReference>
<dbReference type="GO" id="GO:0010004">
    <property type="term" value="P:gastrulation involving germ band extension"/>
    <property type="evidence" value="ECO:0000315"/>
    <property type="project" value="UniProtKB"/>
</dbReference>
<dbReference type="GO" id="GO:0035224">
    <property type="term" value="P:genital disc anterior/posterior pattern formation"/>
    <property type="evidence" value="ECO:0000270"/>
    <property type="project" value="FlyBase"/>
</dbReference>
<dbReference type="GO" id="GO:0035215">
    <property type="term" value="P:genital disc development"/>
    <property type="evidence" value="ECO:0000315"/>
    <property type="project" value="FlyBase"/>
</dbReference>
<dbReference type="GO" id="GO:0007377">
    <property type="term" value="P:germ-band extension"/>
    <property type="evidence" value="ECO:0000315"/>
    <property type="project" value="FlyBase"/>
</dbReference>
<dbReference type="GO" id="GO:0007442">
    <property type="term" value="P:hindgut morphogenesis"/>
    <property type="evidence" value="ECO:0000315"/>
    <property type="project" value="UniProtKB"/>
</dbReference>
<dbReference type="GO" id="GO:0007443">
    <property type="term" value="P:Malpighian tubule morphogenesis"/>
    <property type="evidence" value="ECO:0000304"/>
    <property type="project" value="FlyBase"/>
</dbReference>
<dbReference type="GO" id="GO:0002807">
    <property type="term" value="P:positive regulation of antimicrobial peptide biosynthetic process"/>
    <property type="evidence" value="ECO:0000314"/>
    <property type="project" value="FlyBase"/>
</dbReference>
<dbReference type="GO" id="GO:0008284">
    <property type="term" value="P:positive regulation of cell population proliferation"/>
    <property type="evidence" value="ECO:0000314"/>
    <property type="project" value="FlyBase"/>
</dbReference>
<dbReference type="GO" id="GO:0045893">
    <property type="term" value="P:positive regulation of DNA-templated transcription"/>
    <property type="evidence" value="ECO:0000315"/>
    <property type="project" value="UniProtKB"/>
</dbReference>
<dbReference type="GO" id="GO:0045944">
    <property type="term" value="P:positive regulation of transcription by RNA polymerase II"/>
    <property type="evidence" value="ECO:0000314"/>
    <property type="project" value="FlyBase"/>
</dbReference>
<dbReference type="GO" id="GO:0006357">
    <property type="term" value="P:regulation of transcription by RNA polymerase II"/>
    <property type="evidence" value="ECO:0000318"/>
    <property type="project" value="GO_Central"/>
</dbReference>
<dbReference type="GO" id="GO:0007379">
    <property type="term" value="P:segment specification"/>
    <property type="evidence" value="ECO:0000315"/>
    <property type="project" value="FlyBase"/>
</dbReference>
<dbReference type="CDD" id="cd00086">
    <property type="entry name" value="homeodomain"/>
    <property type="match status" value="1"/>
</dbReference>
<dbReference type="FunFam" id="1.10.10.60:FF:000860">
    <property type="entry name" value="Homeotic protein caudal"/>
    <property type="match status" value="1"/>
</dbReference>
<dbReference type="Gene3D" id="1.10.10.60">
    <property type="entry name" value="Homeodomain-like"/>
    <property type="match status" value="1"/>
</dbReference>
<dbReference type="InterPro" id="IPR047152">
    <property type="entry name" value="Caudal_homeobox"/>
</dbReference>
<dbReference type="InterPro" id="IPR001356">
    <property type="entry name" value="HD"/>
</dbReference>
<dbReference type="InterPro" id="IPR020479">
    <property type="entry name" value="HD_metazoa"/>
</dbReference>
<dbReference type="InterPro" id="IPR017970">
    <property type="entry name" value="Homeobox_CS"/>
</dbReference>
<dbReference type="InterPro" id="IPR009057">
    <property type="entry name" value="Homeodomain-like_sf"/>
</dbReference>
<dbReference type="InterPro" id="IPR000047">
    <property type="entry name" value="HTH_motif"/>
</dbReference>
<dbReference type="PANTHER" id="PTHR24332">
    <property type="entry name" value="HOMEOBOX PROTEIN CDX"/>
    <property type="match status" value="1"/>
</dbReference>
<dbReference type="PANTHER" id="PTHR24332:SF9">
    <property type="entry name" value="HOMEOTIC PROTEIN CAUDAL"/>
    <property type="match status" value="1"/>
</dbReference>
<dbReference type="Pfam" id="PF00046">
    <property type="entry name" value="Homeodomain"/>
    <property type="match status" value="1"/>
</dbReference>
<dbReference type="PRINTS" id="PR00024">
    <property type="entry name" value="HOMEOBOX"/>
</dbReference>
<dbReference type="PRINTS" id="PR00031">
    <property type="entry name" value="HTHREPRESSR"/>
</dbReference>
<dbReference type="SMART" id="SM00389">
    <property type="entry name" value="HOX"/>
    <property type="match status" value="1"/>
</dbReference>
<dbReference type="SUPFAM" id="SSF46689">
    <property type="entry name" value="Homeodomain-like"/>
    <property type="match status" value="1"/>
</dbReference>
<dbReference type="PROSITE" id="PS00027">
    <property type="entry name" value="HOMEOBOX_1"/>
    <property type="match status" value="1"/>
</dbReference>
<dbReference type="PROSITE" id="PS50071">
    <property type="entry name" value="HOMEOBOX_2"/>
    <property type="match status" value="1"/>
</dbReference>
<feature type="chain" id="PRO_0000049017" description="Homeotic protein caudal">
    <location>
        <begin position="1"/>
        <end position="427"/>
    </location>
</feature>
<feature type="DNA-binding region" description="Homeobox" evidence="1">
    <location>
        <begin position="273"/>
        <end position="332"/>
    </location>
</feature>
<feature type="region of interest" description="Disordered" evidence="2">
    <location>
        <begin position="104"/>
        <end position="273"/>
    </location>
</feature>
<feature type="short sequence motif" description="Antp-type hexapeptide">
    <location>
        <begin position="252"/>
        <end position="257"/>
    </location>
</feature>
<feature type="compositionally biased region" description="Low complexity" evidence="2">
    <location>
        <begin position="116"/>
        <end position="129"/>
    </location>
</feature>
<feature type="compositionally biased region" description="Gly residues" evidence="2">
    <location>
        <begin position="145"/>
        <end position="164"/>
    </location>
</feature>
<feature type="compositionally biased region" description="Polar residues" evidence="2">
    <location>
        <begin position="183"/>
        <end position="195"/>
    </location>
</feature>
<feature type="compositionally biased region" description="Low complexity" evidence="2">
    <location>
        <begin position="209"/>
        <end position="243"/>
    </location>
</feature>
<feature type="modified residue" description="Phosphothreonine" evidence="6">
    <location>
        <position position="245"/>
    </location>
</feature>
<feature type="splice variant" id="VSP_046454" description="In isoform 2." evidence="10">
    <original>GKTRTK</original>
    <variation>VHANFL</variation>
    <location>
        <begin position="268"/>
        <end position="273"/>
    </location>
</feature>
<feature type="splice variant" id="VSP_046455" description="In isoform 2." evidence="10">
    <location>
        <begin position="274"/>
        <end position="427"/>
    </location>
</feature>
<feature type="sequence conflict" description="In Ref. 1; AAA28409." evidence="11" ref="1">
    <original>G</original>
    <variation>A</variation>
    <location>
        <position position="129"/>
    </location>
</feature>
<feature type="sequence conflict" description="In Ref. 1; AAA28409." evidence="11" ref="1">
    <original>G</original>
    <variation>V</variation>
    <location>
        <position position="151"/>
    </location>
</feature>
<feature type="sequence conflict" description="In Ref. 1; AAA28409." evidence="11" ref="1">
    <original>P</original>
    <variation>A</variation>
    <location>
        <position position="167"/>
    </location>
</feature>
<feature type="sequence conflict" description="In Ref. 1; AAA28409 and 6; CAA26868." evidence="11" ref="1 6">
    <location>
        <position position="215"/>
    </location>
</feature>
<feature type="sequence conflict" description="In Ref. 1; AAA28409 and 6; CAA26868." evidence="11" ref="1 6">
    <original>KQ</original>
    <variation>TS</variation>
    <location>
        <begin position="330"/>
        <end position="331"/>
    </location>
</feature>
<feature type="sequence conflict" description="In Ref. 1; AAA28409." evidence="11" ref="1">
    <original>A</original>
    <variation>T</variation>
    <location>
        <position position="358"/>
    </location>
</feature>
<feature type="sequence conflict" description="In Ref. 6; CAA26868." evidence="11" ref="6">
    <original>KL</original>
    <variation>NV</variation>
    <location>
        <begin position="359"/>
        <end position="360"/>
    </location>
</feature>
<accession>P09085</accession>
<accession>A4V0Y1</accession>
<accession>D4G7D2</accession>
<accession>Q9VIJ6</accession>
<keyword id="KW-0025">Alternative splicing</keyword>
<keyword id="KW-0217">Developmental protein</keyword>
<keyword id="KW-0238">DNA-binding</keyword>
<keyword id="KW-0306">Gastrulation</keyword>
<keyword id="KW-0371">Homeobox</keyword>
<keyword id="KW-0539">Nucleus</keyword>
<keyword id="KW-0597">Phosphoprotein</keyword>
<keyword id="KW-1185">Reference proteome</keyword>
<keyword id="KW-0804">Transcription</keyword>
<keyword id="KW-0805">Transcription regulation</keyword>
<name>CAD_DROME</name>
<gene>
    <name type="primary">cad</name>
    <name type="ORF">CG1759</name>
</gene>
<evidence type="ECO:0000255" key="1">
    <source>
        <dbReference type="PROSITE-ProRule" id="PRU00108"/>
    </source>
</evidence>
<evidence type="ECO:0000256" key="2">
    <source>
        <dbReference type="SAM" id="MobiDB-lite"/>
    </source>
</evidence>
<evidence type="ECO:0000269" key="3">
    <source>
    </source>
</evidence>
<evidence type="ECO:0000269" key="4">
    <source>
    </source>
</evidence>
<evidence type="ECO:0000269" key="5">
    <source>
    </source>
</evidence>
<evidence type="ECO:0000269" key="6">
    <source>
    </source>
</evidence>
<evidence type="ECO:0000269" key="7">
    <source>
    </source>
</evidence>
<evidence type="ECO:0000269" key="8">
    <source>
    </source>
</evidence>
<evidence type="ECO:0000269" key="9">
    <source>
    </source>
</evidence>
<evidence type="ECO:0000303" key="10">
    <source ref="5"/>
</evidence>
<evidence type="ECO:0000305" key="11"/>
<proteinExistence type="evidence at protein level"/>
<comment type="function">
    <text evidence="3 4 8 9">Caudal (cad) is one of a number of transcription factors controlling segmentation of the embryo. Further transcriptional regulation via a 5' flanking region containing DNA replication-related elements (DRE) and by dref also regulated by trh and tgo via the CNS midline element. Alongside Bicoid (bcd), caudal forms concentration gradients down the anterior-posterior (A-P) axis providing positional information and subsequent induction of the gap genes. Plays a role in gastrulation/germ band extension, hindgut morphogenesis, positive regulation of cell proliferation, genital disk development and pattern formation. Acts as a key regulator of the Hox gene network and activates transcription via the downstream core promoter element (DPE) relative to the TATA box. Plays a role in the establishment of the hindgut and in the invagination of the hindgut primordium during gastrulation. These effects on the gut are achieved by acting combinatorially at the posterior of the embryo to activate transcription of different targets including fog, fkh and wg. Caudal is involved in regulation of proliferation through transactivation of the E2F gene. Postembryonically its function is mostly restricted to the intestine where it regulates antimicrobial peptide (AMP) levels preserving the normal gut flora.</text>
</comment>
<comment type="subcellular location">
    <subcellularLocation>
        <location evidence="1 7">Nucleus</location>
    </subcellularLocation>
</comment>
<comment type="alternative products">
    <event type="alternative splicing"/>
    <isoform>
        <id>P09085-1</id>
        <name>1</name>
        <name>A</name>
        <name>B</name>
        <sequence type="displayed"/>
    </isoform>
    <isoform>
        <id>P09085-2</id>
        <name>2</name>
        <sequence type="described" ref="VSP_046454 VSP_046455"/>
    </isoform>
</comment>
<comment type="tissue specificity">
    <text evidence="7">Maternally localized in an anteroposterior gradient in the syncytial blastoderm. Also expressed in the pole cells. Zygotically localized in the primordia of the terminal abdominal segment, the hindgut and in the posterior midgut rudiment. Expressed in the gut, the gonads and parts of the genital disks of third instar larvae (at protein level).</text>
</comment>
<comment type="developmental stage">
    <text evidence="5 7">Expressed both maternally and zygotically.</text>
</comment>
<comment type="similarity">
    <text evidence="11">Belongs to the Caudal homeobox family.</text>
</comment>
<comment type="sequence caution" evidence="11">
    <conflict type="frameshift">
        <sequence resource="EMBL-CDS" id="AAA28409"/>
    </conflict>
</comment>